<evidence type="ECO:0000255" key="1">
    <source>
        <dbReference type="HAMAP-Rule" id="MF_01894"/>
    </source>
</evidence>
<evidence type="ECO:0000256" key="2">
    <source>
        <dbReference type="SAM" id="MobiDB-lite"/>
    </source>
</evidence>
<reference key="1">
    <citation type="journal article" date="1996" name="DNA Res.">
        <title>Sequence analysis of the genome of the unicellular cyanobacterium Synechocystis sp. strain PCC6803. II. Sequence determination of the entire genome and assignment of potential protein-coding regions.</title>
        <authorList>
            <person name="Kaneko T."/>
            <person name="Sato S."/>
            <person name="Kotani H."/>
            <person name="Tanaka A."/>
            <person name="Asamizu E."/>
            <person name="Nakamura Y."/>
            <person name="Miyajima N."/>
            <person name="Hirosawa M."/>
            <person name="Sugiura M."/>
            <person name="Sasamoto S."/>
            <person name="Kimura T."/>
            <person name="Hosouchi T."/>
            <person name="Matsuno A."/>
            <person name="Muraki A."/>
            <person name="Nakazaki N."/>
            <person name="Naruo K."/>
            <person name="Okumura S."/>
            <person name="Shimpo S."/>
            <person name="Takeuchi C."/>
            <person name="Wada T."/>
            <person name="Watanabe A."/>
            <person name="Yamada M."/>
            <person name="Yasuda M."/>
            <person name="Tabata S."/>
        </authorList>
    </citation>
    <scope>NUCLEOTIDE SEQUENCE [LARGE SCALE GENOMIC DNA]</scope>
    <source>
        <strain>ATCC 27184 / PCC 6803 / Kazusa</strain>
    </source>
</reference>
<name>SMC_SYNY3</name>
<protein>
    <recommendedName>
        <fullName evidence="1">Chromosome partition protein Smc</fullName>
    </recommendedName>
</protein>
<feature type="chain" id="PRO_0000409282" description="Chromosome partition protein Smc">
    <location>
        <begin position="1"/>
        <end position="1200"/>
    </location>
</feature>
<feature type="domain" description="SMC hinge">
    <location>
        <begin position="542"/>
        <end position="656"/>
    </location>
</feature>
<feature type="region of interest" description="Disordered" evidence="2">
    <location>
        <begin position="90"/>
        <end position="109"/>
    </location>
</feature>
<feature type="coiled-coil region" evidence="1">
    <location>
        <begin position="202"/>
        <end position="528"/>
    </location>
</feature>
<feature type="coiled-coil region" evidence="1">
    <location>
        <begin position="692"/>
        <end position="1046"/>
    </location>
</feature>
<feature type="binding site" evidence="1">
    <location>
        <begin position="33"/>
        <end position="40"/>
    </location>
    <ligand>
        <name>ATP</name>
        <dbReference type="ChEBI" id="CHEBI:30616"/>
    </ligand>
</feature>
<organism>
    <name type="scientific">Synechocystis sp. (strain ATCC 27184 / PCC 6803 / Kazusa)</name>
    <dbReference type="NCBI Taxonomy" id="1111708"/>
    <lineage>
        <taxon>Bacteria</taxon>
        <taxon>Bacillati</taxon>
        <taxon>Cyanobacteriota</taxon>
        <taxon>Cyanophyceae</taxon>
        <taxon>Synechococcales</taxon>
        <taxon>Merismopediaceae</taxon>
        <taxon>Synechocystis</taxon>
    </lineage>
</organism>
<comment type="function">
    <text evidence="1">Required for chromosome condensation and partitioning.</text>
</comment>
<comment type="subunit">
    <text evidence="1">Homodimer.</text>
</comment>
<comment type="subcellular location">
    <subcellularLocation>
        <location evidence="1">Cytoplasm</location>
    </subcellularLocation>
</comment>
<comment type="domain">
    <text evidence="1">Contains large globular domains required for ATP hydrolysis at each terminus and a third globular domain forming a flexible SMC hinge near the middle of the molecule. These domains are separated by coiled-coil structures.</text>
</comment>
<comment type="similarity">
    <text evidence="1">Belongs to the SMC family.</text>
</comment>
<dbReference type="EMBL" id="BA000022">
    <property type="protein sequence ID" value="BAA17371.1"/>
    <property type="molecule type" value="Genomic_DNA"/>
</dbReference>
<dbReference type="PIR" id="S77524">
    <property type="entry name" value="S77524"/>
</dbReference>
<dbReference type="SMR" id="P73340"/>
<dbReference type="FunCoup" id="P73340">
    <property type="interactions" value="395"/>
</dbReference>
<dbReference type="IntAct" id="P73340">
    <property type="interactions" value="1"/>
</dbReference>
<dbReference type="STRING" id="1148.gene:10498234"/>
<dbReference type="PaxDb" id="1148-1652449"/>
<dbReference type="EnsemblBacteria" id="BAA17371">
    <property type="protein sequence ID" value="BAA17371"/>
    <property type="gene ID" value="BAA17371"/>
</dbReference>
<dbReference type="KEGG" id="syn:sll1120"/>
<dbReference type="eggNOG" id="COG1196">
    <property type="taxonomic scope" value="Bacteria"/>
</dbReference>
<dbReference type="InParanoid" id="P73340"/>
<dbReference type="PhylomeDB" id="P73340"/>
<dbReference type="Proteomes" id="UP000001425">
    <property type="component" value="Chromosome"/>
</dbReference>
<dbReference type="GO" id="GO:0005694">
    <property type="term" value="C:chromosome"/>
    <property type="evidence" value="ECO:0007669"/>
    <property type="project" value="InterPro"/>
</dbReference>
<dbReference type="GO" id="GO:0005737">
    <property type="term" value="C:cytoplasm"/>
    <property type="evidence" value="ECO:0007669"/>
    <property type="project" value="UniProtKB-SubCell"/>
</dbReference>
<dbReference type="GO" id="GO:0005524">
    <property type="term" value="F:ATP binding"/>
    <property type="evidence" value="ECO:0007669"/>
    <property type="project" value="UniProtKB-UniRule"/>
</dbReference>
<dbReference type="GO" id="GO:0016887">
    <property type="term" value="F:ATP hydrolysis activity"/>
    <property type="evidence" value="ECO:0007669"/>
    <property type="project" value="InterPro"/>
</dbReference>
<dbReference type="GO" id="GO:0003677">
    <property type="term" value="F:DNA binding"/>
    <property type="evidence" value="ECO:0007669"/>
    <property type="project" value="UniProtKB-UniRule"/>
</dbReference>
<dbReference type="GO" id="GO:0030261">
    <property type="term" value="P:chromosome condensation"/>
    <property type="evidence" value="ECO:0007669"/>
    <property type="project" value="InterPro"/>
</dbReference>
<dbReference type="GO" id="GO:0007059">
    <property type="term" value="P:chromosome segregation"/>
    <property type="evidence" value="ECO:0007669"/>
    <property type="project" value="UniProtKB-UniRule"/>
</dbReference>
<dbReference type="GO" id="GO:0006260">
    <property type="term" value="P:DNA replication"/>
    <property type="evidence" value="ECO:0007669"/>
    <property type="project" value="UniProtKB-UniRule"/>
</dbReference>
<dbReference type="GO" id="GO:0007062">
    <property type="term" value="P:sister chromatid cohesion"/>
    <property type="evidence" value="ECO:0007669"/>
    <property type="project" value="InterPro"/>
</dbReference>
<dbReference type="Gene3D" id="1.10.287.1490">
    <property type="match status" value="1"/>
</dbReference>
<dbReference type="Gene3D" id="1.20.1060.20">
    <property type="match status" value="1"/>
</dbReference>
<dbReference type="Gene3D" id="3.30.70.1620">
    <property type="match status" value="1"/>
</dbReference>
<dbReference type="Gene3D" id="3.40.50.300">
    <property type="entry name" value="P-loop containing nucleotide triphosphate hydrolases"/>
    <property type="match status" value="2"/>
</dbReference>
<dbReference type="HAMAP" id="MF_01894">
    <property type="entry name" value="Smc_prok"/>
    <property type="match status" value="1"/>
</dbReference>
<dbReference type="InterPro" id="IPR027417">
    <property type="entry name" value="P-loop_NTPase"/>
</dbReference>
<dbReference type="InterPro" id="IPR003395">
    <property type="entry name" value="RecF/RecN/SMC_N"/>
</dbReference>
<dbReference type="InterPro" id="IPR024704">
    <property type="entry name" value="SMC"/>
</dbReference>
<dbReference type="InterPro" id="IPR010935">
    <property type="entry name" value="SMC_hinge"/>
</dbReference>
<dbReference type="InterPro" id="IPR036277">
    <property type="entry name" value="SMC_hinge_sf"/>
</dbReference>
<dbReference type="InterPro" id="IPR011890">
    <property type="entry name" value="SMC_prok"/>
</dbReference>
<dbReference type="NCBIfam" id="TIGR02169">
    <property type="entry name" value="SMC_prok_A"/>
    <property type="match status" value="1"/>
</dbReference>
<dbReference type="NCBIfam" id="TIGR02168">
    <property type="entry name" value="SMC_prok_B"/>
    <property type="match status" value="1"/>
</dbReference>
<dbReference type="PANTHER" id="PTHR43977">
    <property type="entry name" value="STRUCTURAL MAINTENANCE OF CHROMOSOMES PROTEIN 3"/>
    <property type="match status" value="1"/>
</dbReference>
<dbReference type="Pfam" id="PF06470">
    <property type="entry name" value="SMC_hinge"/>
    <property type="match status" value="1"/>
</dbReference>
<dbReference type="Pfam" id="PF02463">
    <property type="entry name" value="SMC_N"/>
    <property type="match status" value="2"/>
</dbReference>
<dbReference type="PIRSF" id="PIRSF005719">
    <property type="entry name" value="SMC"/>
    <property type="match status" value="1"/>
</dbReference>
<dbReference type="SMART" id="SM00968">
    <property type="entry name" value="SMC_hinge"/>
    <property type="match status" value="1"/>
</dbReference>
<dbReference type="SUPFAM" id="SSF52540">
    <property type="entry name" value="P-loop containing nucleoside triphosphate hydrolases"/>
    <property type="match status" value="2"/>
</dbReference>
<dbReference type="SUPFAM" id="SSF75553">
    <property type="entry name" value="Smc hinge domain"/>
    <property type="match status" value="1"/>
</dbReference>
<dbReference type="SUPFAM" id="SSF57997">
    <property type="entry name" value="Tropomyosin"/>
    <property type="match status" value="1"/>
</dbReference>
<accession>P73340</accession>
<gene>
    <name evidence="1" type="primary">smc</name>
    <name type="ordered locus">sll1120</name>
</gene>
<sequence length="1200" mass="136136">MVYVKRIELSHFKSFGGTTAIPFLPGFTVVSGPNGSGKSNILDALLFCLGLATSKGMRAERLPDLVNNTFKGNRGSSEASVSVTFELHDGENLSEPGANHNGNGNGAKISKEWTVTRRLKVTKGGNYSSNYYINGETATVTELHEQLNELRIYPEGYNIVLQGDVTRIITMNSKERREIIDELAGVAEFDRKIVKTKETLTEVQDREERCQIIATELERTLERLAADRQKAEKYQALRQQVQEKQGWAKVIQYKAVEQQRQKLWGQLERDREQSQQIQQALDQRSQAIQTQQTELEKLNAQVKALGEEEQLAVAAQLATQKAQRDQLQQRYNDGDRQITNHQQQVGQIQAEISQSQQQFLHIQQEKSFHNTQTLPQLEAAVQTSQQQLEQLRHQAQAIASASEAWVQEQTQLSRTVNQLQDELIPQRSQLAQLEERQQQLLTNLAELTPLLTKVSVELEEKQFAQGQFNFQGEALTSQIQTLASDLAQLEQERSLLQETQTRLLKEQQEKQRQLDKLEAASQAQQEVQGTYATKVILQSDLPGVCGLVAQLGQVEPQYQLALEIAAGGRLGFLVVEDDGVAAAGIEILKQAKAGRATFLPLNKIRPPKGQNPNLSYAHGYIDLAVNLIDGDRRYADIFAFIFGNTIVFDTLVNARNHLGKHRIVTLEGDLLEASGAMSGGSRNQRSGLRFGTMVSEDTAEVKQLRQRLQDIQQVQGRNEELLLERTVRSRQLTQQLMEMRQQQREAQLHGEQTERDIARLSQQQTQINQQQINQQQKLAELQQNLALLQQSLPPLEQQLASAQQQLTALETSQTHQQWQTIQIQIRTVEAEYQRQLQALRQGEDHLKDLQNSSQRLEEKIAQAQEKIAQHQAQDLTLAQEQEQLKIALAEMNGAIQTTEAQLAKLSEKLGSTKQERDRLETQLNQLRSQQQEQQWQWEKLQTNQQEYQENLTQLQTQLEALEQDLPDPWPEIPLLQDRDEANLDFANILEELERSIRNGQKRLEAMEPVNMLALQEYEKTEARLGELSEKLQTIAGERTELLLRIENFTTLRRRSFQDAFDAVNKNFQIIFAELSDGDGYLQLDDAEDPFNGGLNLVAHPKGKPVRRLSSMSGGEKSLTALSFIFALQRYRPSPFYGFDEVDMFLDGANVEKLSKMVRKQAQQAQFIVVSLRRPMIEAAERTIGVTQARGAHTQVLGIKL</sequence>
<keyword id="KW-0067">ATP-binding</keyword>
<keyword id="KW-0175">Coiled coil</keyword>
<keyword id="KW-0963">Cytoplasm</keyword>
<keyword id="KW-0238">DNA-binding</keyword>
<keyword id="KW-0547">Nucleotide-binding</keyword>
<keyword id="KW-1185">Reference proteome</keyword>
<proteinExistence type="inferred from homology"/>